<name>IFNAA_BOVIN</name>
<evidence type="ECO:0000250" key="1"/>
<evidence type="ECO:0000305" key="2"/>
<feature type="signal peptide">
    <location>
        <begin position="1"/>
        <end position="23"/>
    </location>
</feature>
<feature type="chain" id="PRO_0000016385" description="Interferon alpha-A">
    <location>
        <begin position="24"/>
        <end position="189"/>
    </location>
</feature>
<feature type="disulfide bond" evidence="1">
    <location>
        <begin position="24"/>
        <end position="122"/>
    </location>
</feature>
<feature type="disulfide bond" evidence="1">
    <location>
        <begin position="52"/>
        <end position="162"/>
    </location>
</feature>
<keyword id="KW-0051">Antiviral defense</keyword>
<keyword id="KW-0202">Cytokine</keyword>
<keyword id="KW-1015">Disulfide bond</keyword>
<keyword id="KW-1185">Reference proteome</keyword>
<keyword id="KW-0964">Secreted</keyword>
<keyword id="KW-0732">Signal</keyword>
<dbReference type="EMBL" id="M10952">
    <property type="protein sequence ID" value="AAA30573.1"/>
    <property type="molecule type" value="Genomic_DNA"/>
</dbReference>
<dbReference type="EMBL" id="EU276064">
    <property type="protein sequence ID" value="ABX72062.1"/>
    <property type="molecule type" value="mRNA"/>
</dbReference>
<dbReference type="PIR" id="A26028">
    <property type="entry name" value="IVBOIA"/>
</dbReference>
<dbReference type="RefSeq" id="NP_001017411.1">
    <property type="nucleotide sequence ID" value="NM_001017411.1"/>
</dbReference>
<dbReference type="SMR" id="P05007"/>
<dbReference type="FunCoup" id="P05007">
    <property type="interactions" value="322"/>
</dbReference>
<dbReference type="GeneID" id="515951"/>
<dbReference type="KEGG" id="bta:515951"/>
<dbReference type="CTD" id="515951"/>
<dbReference type="InParanoid" id="P05007"/>
<dbReference type="OrthoDB" id="9481177at2759"/>
<dbReference type="Proteomes" id="UP000009136">
    <property type="component" value="Unplaced"/>
</dbReference>
<dbReference type="GO" id="GO:0005615">
    <property type="term" value="C:extracellular space"/>
    <property type="evidence" value="ECO:0000318"/>
    <property type="project" value="GO_Central"/>
</dbReference>
<dbReference type="GO" id="GO:0005125">
    <property type="term" value="F:cytokine activity"/>
    <property type="evidence" value="ECO:0000318"/>
    <property type="project" value="GO_Central"/>
</dbReference>
<dbReference type="GO" id="GO:0005132">
    <property type="term" value="F:type I interferon receptor binding"/>
    <property type="evidence" value="ECO:0000318"/>
    <property type="project" value="GO_Central"/>
</dbReference>
<dbReference type="GO" id="GO:0002250">
    <property type="term" value="P:adaptive immune response"/>
    <property type="evidence" value="ECO:0000318"/>
    <property type="project" value="GO_Central"/>
</dbReference>
<dbReference type="GO" id="GO:0002312">
    <property type="term" value="P:B cell activation involved in immune response"/>
    <property type="evidence" value="ECO:0000318"/>
    <property type="project" value="GO_Central"/>
</dbReference>
<dbReference type="GO" id="GO:0051607">
    <property type="term" value="P:defense response to virus"/>
    <property type="evidence" value="ECO:0007669"/>
    <property type="project" value="UniProtKB-KW"/>
</dbReference>
<dbReference type="GO" id="GO:0006959">
    <property type="term" value="P:humoral immune response"/>
    <property type="evidence" value="ECO:0000318"/>
    <property type="project" value="GO_Central"/>
</dbReference>
<dbReference type="GO" id="GO:0002323">
    <property type="term" value="P:natural killer cell activation involved in immune response"/>
    <property type="evidence" value="ECO:0000318"/>
    <property type="project" value="GO_Central"/>
</dbReference>
<dbReference type="GO" id="GO:0009891">
    <property type="term" value="P:positive regulation of biosynthetic process"/>
    <property type="evidence" value="ECO:0007669"/>
    <property type="project" value="UniProtKB-ARBA"/>
</dbReference>
<dbReference type="GO" id="GO:0043330">
    <property type="term" value="P:response to exogenous dsRNA"/>
    <property type="evidence" value="ECO:0000318"/>
    <property type="project" value="GO_Central"/>
</dbReference>
<dbReference type="GO" id="GO:0002286">
    <property type="term" value="P:T cell activation involved in immune response"/>
    <property type="evidence" value="ECO:0000318"/>
    <property type="project" value="GO_Central"/>
</dbReference>
<dbReference type="GO" id="GO:0060337">
    <property type="term" value="P:type I interferon-mediated signaling pathway"/>
    <property type="evidence" value="ECO:0000318"/>
    <property type="project" value="GO_Central"/>
</dbReference>
<dbReference type="CDD" id="cd00095">
    <property type="entry name" value="IFab"/>
    <property type="match status" value="1"/>
</dbReference>
<dbReference type="FunFam" id="1.20.1250.10:FF:000001">
    <property type="entry name" value="Interferon alpha"/>
    <property type="match status" value="1"/>
</dbReference>
<dbReference type="Gene3D" id="1.20.1250.10">
    <property type="match status" value="1"/>
</dbReference>
<dbReference type="InterPro" id="IPR009079">
    <property type="entry name" value="4_helix_cytokine-like_core"/>
</dbReference>
<dbReference type="InterPro" id="IPR000471">
    <property type="entry name" value="Interferon_alpha/beta/delta"/>
</dbReference>
<dbReference type="PANTHER" id="PTHR11691:SF60">
    <property type="entry name" value="INTERFERON ALPHA-5"/>
    <property type="match status" value="1"/>
</dbReference>
<dbReference type="PANTHER" id="PTHR11691">
    <property type="entry name" value="TYPE I INTERFERON"/>
    <property type="match status" value="1"/>
</dbReference>
<dbReference type="Pfam" id="PF00143">
    <property type="entry name" value="Interferon"/>
    <property type="match status" value="1"/>
</dbReference>
<dbReference type="PRINTS" id="PR00266">
    <property type="entry name" value="INTERFERONAB"/>
</dbReference>
<dbReference type="SMART" id="SM00076">
    <property type="entry name" value="IFabd"/>
    <property type="match status" value="1"/>
</dbReference>
<dbReference type="SUPFAM" id="SSF47266">
    <property type="entry name" value="4-helical cytokines"/>
    <property type="match status" value="1"/>
</dbReference>
<dbReference type="PROSITE" id="PS00252">
    <property type="entry name" value="INTERFERON_A_B_D"/>
    <property type="match status" value="1"/>
</dbReference>
<reference key="1">
    <citation type="journal article" date="1985" name="J. Biol. Chem.">
        <title>Bovine interferon alpha genes. Structure and expression.</title>
        <authorList>
            <person name="Velan B."/>
            <person name="Cohen S."/>
            <person name="Grosfeld H."/>
            <person name="Leitner M."/>
            <person name="Shafferman A."/>
        </authorList>
    </citation>
    <scope>NUCLEOTIDE SEQUENCE [GENOMIC DNA]</scope>
</reference>
<reference key="2">
    <citation type="submission" date="2007-11" db="EMBL/GenBank/DDBJ databases">
        <title>U.S. veterinary immune reagent network: expressed bovine gene sequences.</title>
        <authorList>
            <consortium name="U.S. Veterinary Immune Reagent Network"/>
            <person name="Hudgens T."/>
            <person name="Tompkins D."/>
            <person name="Baldwin C.L."/>
        </authorList>
    </citation>
    <scope>NUCLEOTIDE SEQUENCE [LARGE SCALE MRNA]</scope>
    <source>
        <strain>Belted Galloway</strain>
        <tissue>Peripheral blood</tissue>
    </source>
</reference>
<protein>
    <recommendedName>
        <fullName>Interferon alpha-A</fullName>
    </recommendedName>
</protein>
<sequence length="189" mass="21437">MAPAWSFLLSLLLLSCNAICSLGCHLPHTHSLANRRVLMLLQQLRRVSPSSCLQDRNDFEFLQEALGGSQLQKAQAISVLHEVTQHTFQLFSTEGSPATWDKSLLDKLRAALDQQLTDLQACLTQEEGLRGAPLLKEDSSLAVRKYFHRLTLYLQEKRHSPCAWEVVRAEVMRAFSSSTNLQESFRRKD</sequence>
<proteinExistence type="evidence at transcript level"/>
<accession>P05007</accession>
<accession>A9QWQ2</accession>
<gene>
    <name type="primary">IFNAA</name>
</gene>
<organism>
    <name type="scientific">Bos taurus</name>
    <name type="common">Bovine</name>
    <dbReference type="NCBI Taxonomy" id="9913"/>
    <lineage>
        <taxon>Eukaryota</taxon>
        <taxon>Metazoa</taxon>
        <taxon>Chordata</taxon>
        <taxon>Craniata</taxon>
        <taxon>Vertebrata</taxon>
        <taxon>Euteleostomi</taxon>
        <taxon>Mammalia</taxon>
        <taxon>Eutheria</taxon>
        <taxon>Laurasiatheria</taxon>
        <taxon>Artiodactyla</taxon>
        <taxon>Ruminantia</taxon>
        <taxon>Pecora</taxon>
        <taxon>Bovidae</taxon>
        <taxon>Bovinae</taxon>
        <taxon>Bos</taxon>
    </lineage>
</organism>
<comment type="function">
    <text>Produced by macrophages, IFN-alpha have antiviral activities. Interferon stimulates the production of two enzymes: a protein kinase and an oligoadenylate synthetase.</text>
</comment>
<comment type="subcellular location">
    <subcellularLocation>
        <location>Secreted</location>
    </subcellularLocation>
</comment>
<comment type="similarity">
    <text evidence="2">Belongs to the alpha/beta interferon family.</text>
</comment>